<accession>O92446</accession>
<accession>O57075</accession>
<organism>
    <name type="scientific">Bombyx mori nuclear polyhedrosis virus</name>
    <name type="common">BmNPV</name>
    <dbReference type="NCBI Taxonomy" id="271108"/>
    <lineage>
        <taxon>Viruses</taxon>
        <taxon>Viruses incertae sedis</taxon>
        <taxon>Naldaviricetes</taxon>
        <taxon>Lefavirales</taxon>
        <taxon>Baculoviridae</taxon>
        <taxon>Alphabaculovirus</taxon>
        <taxon>Alphabaculovirus bomori</taxon>
    </lineage>
</organism>
<proteinExistence type="inferred from homology"/>
<organismHost>
    <name type="scientific">Bombyx mori</name>
    <name type="common">Silk moth</name>
    <dbReference type="NCBI Taxonomy" id="7091"/>
</organismHost>
<name>VP91_NPVBM</name>
<dbReference type="EMBL" id="U83330">
    <property type="protein sequence ID" value="AAC59473.1"/>
    <property type="molecule type" value="Genomic_DNA"/>
</dbReference>
<dbReference type="EMBL" id="L33180">
    <property type="protein sequence ID" value="AAC63755.1"/>
    <property type="molecule type" value="Genomic_DNA"/>
</dbReference>
<dbReference type="PIR" id="T41826">
    <property type="entry name" value="T41826"/>
</dbReference>
<dbReference type="RefSeq" id="NP_047486.1">
    <property type="nucleotide sequence ID" value="NC_001962.1"/>
</dbReference>
<dbReference type="CAZy" id="CBM14">
    <property type="family name" value="Carbohydrate-Binding Module Family 14"/>
</dbReference>
<dbReference type="GlyCosmos" id="O92446">
    <property type="glycosylation" value="6 sites, No reported glycans"/>
</dbReference>
<dbReference type="GeneID" id="1488701"/>
<dbReference type="KEGG" id="vg:1488701"/>
<dbReference type="OrthoDB" id="542at10239"/>
<dbReference type="Proteomes" id="UP000204315">
    <property type="component" value="Genome"/>
</dbReference>
<dbReference type="GO" id="GO:0005576">
    <property type="term" value="C:extracellular region"/>
    <property type="evidence" value="ECO:0007669"/>
    <property type="project" value="InterPro"/>
</dbReference>
<dbReference type="GO" id="GO:0044423">
    <property type="term" value="C:virion component"/>
    <property type="evidence" value="ECO:0007669"/>
    <property type="project" value="UniProtKB-KW"/>
</dbReference>
<dbReference type="GO" id="GO:0008061">
    <property type="term" value="F:chitin binding"/>
    <property type="evidence" value="ECO:0007669"/>
    <property type="project" value="UniProtKB-KW"/>
</dbReference>
<dbReference type="GO" id="GO:0008270">
    <property type="term" value="F:zinc ion binding"/>
    <property type="evidence" value="ECO:0007669"/>
    <property type="project" value="UniProtKB-KW"/>
</dbReference>
<dbReference type="InterPro" id="IPR013682">
    <property type="entry name" value="BaculoV_Vp91_N"/>
</dbReference>
<dbReference type="InterPro" id="IPR002557">
    <property type="entry name" value="Chitin-bd_dom"/>
</dbReference>
<dbReference type="InterPro" id="IPR036508">
    <property type="entry name" value="Chitin-bd_dom_sf"/>
</dbReference>
<dbReference type="Pfam" id="PF08475">
    <property type="entry name" value="Baculo_VP91_N"/>
    <property type="match status" value="1"/>
</dbReference>
<dbReference type="Pfam" id="PF01607">
    <property type="entry name" value="CBM_14"/>
    <property type="match status" value="1"/>
</dbReference>
<dbReference type="SMART" id="SM00494">
    <property type="entry name" value="ChtBD2"/>
    <property type="match status" value="1"/>
</dbReference>
<dbReference type="SUPFAM" id="SSF57625">
    <property type="entry name" value="Invertebrate chitin-binding proteins"/>
    <property type="match status" value="1"/>
</dbReference>
<dbReference type="PROSITE" id="PS50940">
    <property type="entry name" value="CHIT_BIND_II"/>
    <property type="match status" value="1"/>
</dbReference>
<dbReference type="PROSITE" id="PS51807">
    <property type="entry name" value="ZF_C2HC_BV"/>
    <property type="match status" value="1"/>
</dbReference>
<evidence type="ECO:0000250" key="1"/>
<evidence type="ECO:0000255" key="2"/>
<evidence type="ECO:0000255" key="3">
    <source>
        <dbReference type="PROSITE-ProRule" id="PRU00144"/>
    </source>
</evidence>
<evidence type="ECO:0000255" key="4">
    <source>
        <dbReference type="PROSITE-ProRule" id="PRU01148"/>
    </source>
</evidence>
<evidence type="ECO:0000256" key="5">
    <source>
        <dbReference type="SAM" id="MobiDB-lite"/>
    </source>
</evidence>
<keyword id="KW-0147">Chitin-binding</keyword>
<keyword id="KW-1015">Disulfide bond</keyword>
<keyword id="KW-0325">Glycoprotein</keyword>
<keyword id="KW-0479">Metal-binding</keyword>
<keyword id="KW-0677">Repeat</keyword>
<keyword id="KW-0732">Signal</keyword>
<keyword id="KW-0946">Virion</keyword>
<keyword id="KW-0862">Zinc</keyword>
<keyword id="KW-0863">Zinc-finger</keyword>
<comment type="function">
    <text evidence="1">Probable capsid-associated protein.</text>
</comment>
<comment type="subcellular location">
    <subcellularLocation>
        <location evidence="1">Virion</location>
    </subcellularLocation>
    <text evidence="1">In virions, associates with the capsid and maybe also with the envelope surrounding the capsid.</text>
</comment>
<reference key="1">
    <citation type="journal article" date="1998" name="J. Virol.">
        <title>The p95 gene of Bombyx mori nuclear polyhedrosis virus: temporal expression and functional properties.</title>
        <authorList>
            <person name="Lu M."/>
            <person name="Swevers L."/>
            <person name="Iatrou K."/>
        </authorList>
    </citation>
    <scope>NUCLEOTIDE SEQUENCE [GENOMIC DNA]</scope>
    <source>
        <strain>Isolate ML1</strain>
    </source>
</reference>
<reference key="2">
    <citation type="journal article" date="1999" name="J. Gen. Virol.">
        <title>Sequence analysis of the genome of Bombyx mori nucleopolyhedrovirus.</title>
        <authorList>
            <person name="Gomi S."/>
            <person name="Majima K."/>
            <person name="Maeda S."/>
        </authorList>
    </citation>
    <scope>NUCLEOTIDE SEQUENCE [LARGE SCALE GENOMIC DNA]</scope>
    <source>
        <strain>T3</strain>
    </source>
</reference>
<gene>
    <name type="primary">p95</name>
    <name type="ORF">ORF69</name>
</gene>
<sequence length="839" mass="95764">MMSGVMLLVFAIFLIIAFTLIYLAIYFKFDETTYTKRLQVMIEYIKRTNADEPTPNVIGYVSDITQNTYTVTWFNTVDLSTYQESVHDDRNEIFDFLNQKLQPVDRIVHDRVRANDENPNEFILSGDKDDVTMKCPAYFNFDYAQLKCVPVPPCDNKPAGRYPMDERLLDTLVLNQHLDKDYSSNEHLYHPTFYLRCFANGAHAVEECPDNYTFDAKTRQCKVNELCENRPDGYILSYFPSNLLVNQFMQCVSGRHVVRECPANKIFDRNLMSCVEAHPCTFNGAGHTYITADISDAQYFKCLNNNESQLMTCINRIRNSDNQYECSGDSRCIDLPNGTGQQVFKHADDDISYNSGQLVCDNFEIISNIECDQSNVFENKLFMDKFRLNMQFPTEVFDGTACVPATADNVNFLRSTFAIENIPNHYDIDMQTSMLGKIEMIKQLVSKDLSLNNDAIFAQWLLYARDKNAIGLNPLTGEPIDCFGNNLYDVFDARRANVCKDLGKSVLKTLNFGDGEFLNVLSDTLTGKDEDYRQFCAISYENGQKIVENEHFQRRILTNILQSDVCANIYTTLYQKYTTLNPKYTTTPLQYNRILVKRPKNIEIYGANTRLKNATIPKNATTISPVFNPFENQPNNRQNDSISPLFNPFQTTDAVWYSEPDGDEAVAPPPTAPPPPSEPEPEPEPELPSPLILDNKDLFYSCHYSVPFFKLTSCHAENDVIINALNELRNNVKVDADCESAKDLSHVLNAYAYVGNGIGCRSAYDGDAIVVKKEAVPSHVYANLNTQSNDGVKYNRWLHVKNDQYMACPEELYDNDEFKCNVESDKLYYLDNLQEDSIV</sequence>
<protein>
    <recommendedName>
        <fullName>Capsid-associated protein Vp91</fullName>
    </recommendedName>
</protein>
<feature type="signal peptide" evidence="2">
    <location>
        <begin position="1"/>
        <end position="23"/>
    </location>
</feature>
<feature type="chain" id="PRO_0000045465" description="Capsid-associated protein Vp91">
    <location>
        <begin position="24"/>
        <end position="839"/>
    </location>
</feature>
<feature type="domain" description="Chitin-binding type-2" evidence="3">
    <location>
        <begin position="224"/>
        <end position="282"/>
    </location>
</feature>
<feature type="zinc finger region" description="C2HC BV-type" evidence="4">
    <location>
        <begin position="148"/>
        <end position="197"/>
    </location>
</feature>
<feature type="region of interest" description="Disordered" evidence="5">
    <location>
        <begin position="624"/>
        <end position="644"/>
    </location>
</feature>
<feature type="region of interest" description="Disordered" evidence="5">
    <location>
        <begin position="659"/>
        <end position="690"/>
    </location>
</feature>
<feature type="compositionally biased region" description="Pro residues" evidence="5">
    <location>
        <begin position="667"/>
        <end position="678"/>
    </location>
</feature>
<feature type="glycosylation site" description="N-linked (GlcNAc...) asparagine; by host" evidence="2">
    <location>
        <position position="211"/>
    </location>
</feature>
<feature type="glycosylation site" description="N-linked (GlcNAc...) asparagine; by host" evidence="2">
    <location>
        <position position="306"/>
    </location>
</feature>
<feature type="glycosylation site" description="N-linked (GlcNAc...) asparagine; by host" evidence="2">
    <location>
        <position position="337"/>
    </location>
</feature>
<feature type="glycosylation site" description="N-linked (GlcNAc...) asparagine; by host" evidence="2">
    <location>
        <position position="613"/>
    </location>
</feature>
<feature type="glycosylation site" description="N-linked (GlcNAc...) asparagine; by host" evidence="2">
    <location>
        <position position="619"/>
    </location>
</feature>
<feature type="glycosylation site" description="N-linked (GlcNAc...) asparagine; by host" evidence="2">
    <location>
        <position position="639"/>
    </location>
</feature>
<feature type="disulfide bond" evidence="3">
    <location>
        <begin position="208"/>
        <end position="221"/>
    </location>
</feature>
<feature type="disulfide bond" evidence="3">
    <location>
        <begin position="261"/>
        <end position="274"/>
    </location>
</feature>
<feature type="sequence variant" description="In strain: T3.">
    <original>I</original>
    <variation>T</variation>
    <location>
        <position position="107"/>
    </location>
</feature>
<feature type="sequence variant" description="In strain: T3.">
    <original>D</original>
    <variation>E</variation>
    <location>
        <position position="127"/>
    </location>
</feature>
<feature type="sequence variant" description="In strain: T3.">
    <original>A</original>
    <variation>R</variation>
    <location>
        <position position="202"/>
    </location>
</feature>
<feature type="sequence variant" description="In strain: T3.">
    <original>KTR</original>
    <variation>ETS</variation>
    <location>
        <begin position="217"/>
        <end position="219"/>
    </location>
</feature>
<feature type="sequence variant" description="In strain: T3.">
    <original>S</original>
    <variation>T</variation>
    <location>
        <position position="295"/>
    </location>
</feature>
<feature type="sequence variant" description="In strain: T3.">
    <original>S</original>
    <variation>L</variation>
    <location>
        <position position="320"/>
    </location>
</feature>
<feature type="sequence variant" description="In strain: T3.">
    <original>R</original>
    <variation>K</variation>
    <location>
        <position position="331"/>
    </location>
</feature>
<feature type="sequence variant" description="In strain: T3.">
    <original>E</original>
    <variation>D</variation>
    <location>
        <position position="370"/>
    </location>
</feature>
<feature type="sequence variant" description="In strain: T3.">
    <original>N</original>
    <variation>S</variation>
    <location>
        <position position="379"/>
    </location>
</feature>
<feature type="sequence variant" description="In strain: T3.">
    <original>N</original>
    <variation>D</variation>
    <location>
        <position position="468"/>
    </location>
</feature>
<feature type="sequence variant" description="In strain: T3.">
    <original>P</original>
    <variation>S</variation>
    <location>
        <position position="599"/>
    </location>
</feature>
<feature type="sequence variant" description="In strain: T3.">
    <original>Q</original>
    <variation>R</variation>
    <location>
        <position position="638"/>
    </location>
</feature>
<feature type="sequence variant" description="In strain: T3.">
    <original>P</original>
    <variation>S</variation>
    <location>
        <position position="644"/>
    </location>
</feature>
<feature type="sequence variant" description="In strain: T3.">
    <original>A</original>
    <variation>V</variation>
    <location>
        <position position="665"/>
    </location>
</feature>
<feature type="sequence variant" description="In strain: T3.">
    <location>
        <begin position="678"/>
        <end position="681"/>
    </location>
</feature>
<feature type="sequence variant" description="In strain: T3.">
    <original>S</original>
    <variation>L</variation>
    <location>
        <position position="740"/>
    </location>
</feature>
<feature type="sequence variant" description="In strain: T3.">
    <original>G</original>
    <variation>E</variation>
    <location>
        <position position="766"/>
    </location>
</feature>
<feature type="sequence variant" description="In strain: T3.">
    <original>D</original>
    <variation>G</variation>
    <location>
        <position position="803"/>
    </location>
</feature>
<feature type="sequence variant" description="In strain: T3.">
    <original>D</original>
    <variation>N</variation>
    <location>
        <position position="816"/>
    </location>
</feature>
<feature type="sequence variant" description="In strain: T3.">
    <original>I</original>
    <variation>V</variation>
    <location>
        <position position="838"/>
    </location>
</feature>